<name>MNMG_ECO5E</name>
<feature type="chain" id="PRO_1000095650" description="tRNA uridine 5-carboxymethylaminomethyl modification enzyme MnmG">
    <location>
        <begin position="1"/>
        <end position="629"/>
    </location>
</feature>
<feature type="binding site" evidence="1">
    <location>
        <begin position="13"/>
        <end position="18"/>
    </location>
    <ligand>
        <name>FAD</name>
        <dbReference type="ChEBI" id="CHEBI:57692"/>
    </ligand>
</feature>
<feature type="binding site" evidence="1">
    <location>
        <position position="125"/>
    </location>
    <ligand>
        <name>FAD</name>
        <dbReference type="ChEBI" id="CHEBI:57692"/>
    </ligand>
</feature>
<feature type="binding site" evidence="1">
    <location>
        <position position="180"/>
    </location>
    <ligand>
        <name>FAD</name>
        <dbReference type="ChEBI" id="CHEBI:57692"/>
    </ligand>
</feature>
<feature type="binding site" evidence="1">
    <location>
        <begin position="273"/>
        <end position="287"/>
    </location>
    <ligand>
        <name>NAD(+)</name>
        <dbReference type="ChEBI" id="CHEBI:57540"/>
    </ligand>
</feature>
<feature type="binding site" evidence="1">
    <location>
        <position position="370"/>
    </location>
    <ligand>
        <name>FAD</name>
        <dbReference type="ChEBI" id="CHEBI:57692"/>
    </ligand>
</feature>
<sequence>MFYPDPFDVIIIGGGHAGTEAAMAAARMGQQTLLLTHNIDTLGQMSCNPAIGGIGKGHLVKEVDALGGLMAKAIDQAGIQFRILNASKGPAVRATRAQADRVLYRQAVRTALENQPNLMIFQQAVEDLIVENDRVVGAVTQMGLKFRAKAVVLTVGTFLDGKIHIGLDNYSGGRAGDPPSIPLSRRLRELPLRVGRLKTGTPPRIDARTIDFSVLAQQHGDNPMPVFSFMGNASQHPQQVPCYITHTNEKTHDVIRSNLDRSPMYAGVIEGVGPRYCPSIEDKVMRFADRNQHQIFLEPEGLTSNEIYPNGISTSLPFDVQMQIVRSMQGMENAKIVRPGYAIEYDFFDPRDLKPTLESKFIQGLFFAGQINGTTGYEEAAAQGLLAGLNAARLSDDKEGWAPARSQAYLGVLVDDLCTLGTKEPYRMFTSRAEYRLMLREDNADLRLTEIGRELGLVDDERWARFNEKLENIERERQRLKSTWVTPSAEAAAEVNAHLTAPLSREASGEDLLRRPEMTYEKLTTLTPFAPALTDEQAAEQVEIQVKYEGYIARQQDEIEKQLRNENTLLPATLDYRQVSGLSNEVIAKLNDHKPASIGQASRISGVTPAAISILLVWLKKQGMLRRSA</sequence>
<reference key="1">
    <citation type="journal article" date="2011" name="Proc. Natl. Acad. Sci. U.S.A.">
        <title>Genomic anatomy of Escherichia coli O157:H7 outbreaks.</title>
        <authorList>
            <person name="Eppinger M."/>
            <person name="Mammel M.K."/>
            <person name="Leclerc J.E."/>
            <person name="Ravel J."/>
            <person name="Cebula T.A."/>
        </authorList>
    </citation>
    <scope>NUCLEOTIDE SEQUENCE [LARGE SCALE GENOMIC DNA]</scope>
    <source>
        <strain>EC4115 / EHEC</strain>
    </source>
</reference>
<dbReference type="EMBL" id="CP001164">
    <property type="protein sequence ID" value="ACI39120.1"/>
    <property type="molecule type" value="Genomic_DNA"/>
</dbReference>
<dbReference type="RefSeq" id="WP_000499793.1">
    <property type="nucleotide sequence ID" value="NC_011353.1"/>
</dbReference>
<dbReference type="SMR" id="B5YXE5"/>
<dbReference type="KEGG" id="ecf:ECH74115_5177"/>
<dbReference type="HOGENOM" id="CLU_007831_2_2_6"/>
<dbReference type="GO" id="GO:0005829">
    <property type="term" value="C:cytosol"/>
    <property type="evidence" value="ECO:0007669"/>
    <property type="project" value="TreeGrafter"/>
</dbReference>
<dbReference type="GO" id="GO:0050660">
    <property type="term" value="F:flavin adenine dinucleotide binding"/>
    <property type="evidence" value="ECO:0007669"/>
    <property type="project" value="UniProtKB-UniRule"/>
</dbReference>
<dbReference type="GO" id="GO:0030488">
    <property type="term" value="P:tRNA methylation"/>
    <property type="evidence" value="ECO:0007669"/>
    <property type="project" value="TreeGrafter"/>
</dbReference>
<dbReference type="GO" id="GO:0002098">
    <property type="term" value="P:tRNA wobble uridine modification"/>
    <property type="evidence" value="ECO:0007669"/>
    <property type="project" value="InterPro"/>
</dbReference>
<dbReference type="FunFam" id="1.10.10.1800:FF:000001">
    <property type="entry name" value="tRNA uridine 5-carboxymethylaminomethyl modification enzyme MnmG"/>
    <property type="match status" value="1"/>
</dbReference>
<dbReference type="FunFam" id="1.10.150.570:FF:000001">
    <property type="entry name" value="tRNA uridine 5-carboxymethylaminomethyl modification enzyme MnmG"/>
    <property type="match status" value="1"/>
</dbReference>
<dbReference type="FunFam" id="3.50.50.60:FF:000002">
    <property type="entry name" value="tRNA uridine 5-carboxymethylaminomethyl modification enzyme MnmG"/>
    <property type="match status" value="1"/>
</dbReference>
<dbReference type="FunFam" id="3.50.50.60:FF:000010">
    <property type="entry name" value="tRNA uridine 5-carboxymethylaminomethyl modification enzyme MnmG"/>
    <property type="match status" value="1"/>
</dbReference>
<dbReference type="Gene3D" id="3.50.50.60">
    <property type="entry name" value="FAD/NAD(P)-binding domain"/>
    <property type="match status" value="2"/>
</dbReference>
<dbReference type="Gene3D" id="1.10.150.570">
    <property type="entry name" value="GidA associated domain, C-terminal subdomain"/>
    <property type="match status" value="1"/>
</dbReference>
<dbReference type="Gene3D" id="1.10.10.1800">
    <property type="entry name" value="tRNA uridine 5-carboxymethylaminomethyl modification enzyme MnmG/GidA"/>
    <property type="match status" value="1"/>
</dbReference>
<dbReference type="HAMAP" id="MF_00129">
    <property type="entry name" value="MnmG_GidA"/>
    <property type="match status" value="1"/>
</dbReference>
<dbReference type="InterPro" id="IPR036188">
    <property type="entry name" value="FAD/NAD-bd_sf"/>
</dbReference>
<dbReference type="InterPro" id="IPR049312">
    <property type="entry name" value="GIDA_C_N"/>
</dbReference>
<dbReference type="InterPro" id="IPR004416">
    <property type="entry name" value="MnmG"/>
</dbReference>
<dbReference type="InterPro" id="IPR002218">
    <property type="entry name" value="MnmG-rel"/>
</dbReference>
<dbReference type="InterPro" id="IPR020595">
    <property type="entry name" value="MnmG-rel_CS"/>
</dbReference>
<dbReference type="InterPro" id="IPR026904">
    <property type="entry name" value="MnmG_C"/>
</dbReference>
<dbReference type="InterPro" id="IPR047001">
    <property type="entry name" value="MnmG_C_subdom"/>
</dbReference>
<dbReference type="InterPro" id="IPR044920">
    <property type="entry name" value="MnmG_C_subdom_sf"/>
</dbReference>
<dbReference type="InterPro" id="IPR040131">
    <property type="entry name" value="MnmG_N"/>
</dbReference>
<dbReference type="NCBIfam" id="TIGR00136">
    <property type="entry name" value="mnmG_gidA"/>
    <property type="match status" value="1"/>
</dbReference>
<dbReference type="PANTHER" id="PTHR11806">
    <property type="entry name" value="GLUCOSE INHIBITED DIVISION PROTEIN A"/>
    <property type="match status" value="1"/>
</dbReference>
<dbReference type="PANTHER" id="PTHR11806:SF0">
    <property type="entry name" value="PROTEIN MTO1 HOMOLOG, MITOCHONDRIAL"/>
    <property type="match status" value="1"/>
</dbReference>
<dbReference type="Pfam" id="PF01134">
    <property type="entry name" value="GIDA"/>
    <property type="match status" value="1"/>
</dbReference>
<dbReference type="Pfam" id="PF21680">
    <property type="entry name" value="GIDA_C_1st"/>
    <property type="match status" value="1"/>
</dbReference>
<dbReference type="Pfam" id="PF13932">
    <property type="entry name" value="SAM_GIDA_C"/>
    <property type="match status" value="1"/>
</dbReference>
<dbReference type="SMART" id="SM01228">
    <property type="entry name" value="GIDA_assoc_3"/>
    <property type="match status" value="1"/>
</dbReference>
<dbReference type="SUPFAM" id="SSF51905">
    <property type="entry name" value="FAD/NAD(P)-binding domain"/>
    <property type="match status" value="1"/>
</dbReference>
<dbReference type="PROSITE" id="PS01280">
    <property type="entry name" value="GIDA_1"/>
    <property type="match status" value="1"/>
</dbReference>
<dbReference type="PROSITE" id="PS01281">
    <property type="entry name" value="GIDA_2"/>
    <property type="match status" value="1"/>
</dbReference>
<proteinExistence type="inferred from homology"/>
<evidence type="ECO:0000255" key="1">
    <source>
        <dbReference type="HAMAP-Rule" id="MF_00129"/>
    </source>
</evidence>
<gene>
    <name evidence="1" type="primary">mnmG</name>
    <name evidence="1" type="synonym">gidA</name>
    <name type="ordered locus">ECH74115_5177</name>
</gene>
<protein>
    <recommendedName>
        <fullName evidence="1">tRNA uridine 5-carboxymethylaminomethyl modification enzyme MnmG</fullName>
    </recommendedName>
    <alternativeName>
        <fullName evidence="1">Glucose-inhibited division protein A</fullName>
    </alternativeName>
</protein>
<keyword id="KW-0963">Cytoplasm</keyword>
<keyword id="KW-0274">FAD</keyword>
<keyword id="KW-0285">Flavoprotein</keyword>
<keyword id="KW-0520">NAD</keyword>
<keyword id="KW-0819">tRNA processing</keyword>
<accession>B5YXE5</accession>
<organism>
    <name type="scientific">Escherichia coli O157:H7 (strain EC4115 / EHEC)</name>
    <dbReference type="NCBI Taxonomy" id="444450"/>
    <lineage>
        <taxon>Bacteria</taxon>
        <taxon>Pseudomonadati</taxon>
        <taxon>Pseudomonadota</taxon>
        <taxon>Gammaproteobacteria</taxon>
        <taxon>Enterobacterales</taxon>
        <taxon>Enterobacteriaceae</taxon>
        <taxon>Escherichia</taxon>
    </lineage>
</organism>
<comment type="function">
    <text evidence="1">NAD-binding protein involved in the addition of a carboxymethylaminomethyl (cmnm) group at the wobble position (U34) of certain tRNAs, forming tRNA-cmnm(5)s(2)U34.</text>
</comment>
<comment type="cofactor">
    <cofactor evidence="1">
        <name>FAD</name>
        <dbReference type="ChEBI" id="CHEBI:57692"/>
    </cofactor>
</comment>
<comment type="subunit">
    <text evidence="1">Homodimer. Heterotetramer of two MnmE and two MnmG subunits.</text>
</comment>
<comment type="subcellular location">
    <subcellularLocation>
        <location evidence="1">Cytoplasm</location>
    </subcellularLocation>
</comment>
<comment type="similarity">
    <text evidence="1">Belongs to the MnmG family.</text>
</comment>